<feature type="chain" id="PRO_0000110310" description="NAD-dependent protein deacylase">
    <location>
        <begin position="1"/>
        <end position="258"/>
    </location>
</feature>
<feature type="domain" description="Deacetylase sirtuin-type" evidence="2">
    <location>
        <begin position="3"/>
        <end position="258"/>
    </location>
</feature>
<feature type="active site" description="Proton acceptor" evidence="2">
    <location>
        <position position="127"/>
    </location>
</feature>
<feature type="binding site" evidence="1">
    <location>
        <begin position="28"/>
        <end position="48"/>
    </location>
    <ligand>
        <name>NAD(+)</name>
        <dbReference type="ChEBI" id="CHEBI:57540"/>
    </ligand>
</feature>
<feature type="binding site" evidence="1">
    <location>
        <position position="73"/>
    </location>
    <ligand>
        <name>substrate</name>
    </ligand>
</feature>
<feature type="binding site" evidence="1">
    <location>
        <position position="76"/>
    </location>
    <ligand>
        <name>substrate</name>
    </ligand>
</feature>
<feature type="binding site" evidence="1">
    <location>
        <begin position="109"/>
        <end position="112"/>
    </location>
    <ligand>
        <name>NAD(+)</name>
        <dbReference type="ChEBI" id="CHEBI:57540"/>
    </ligand>
</feature>
<feature type="binding site" evidence="1">
    <location>
        <position position="135"/>
    </location>
    <ligand>
        <name>Zn(2+)</name>
        <dbReference type="ChEBI" id="CHEBI:29105"/>
    </ligand>
</feature>
<feature type="binding site" evidence="1">
    <location>
        <position position="138"/>
    </location>
    <ligand>
        <name>Zn(2+)</name>
        <dbReference type="ChEBI" id="CHEBI:29105"/>
    </ligand>
</feature>
<feature type="binding site" evidence="1">
    <location>
        <position position="161"/>
    </location>
    <ligand>
        <name>Zn(2+)</name>
        <dbReference type="ChEBI" id="CHEBI:29105"/>
    </ligand>
</feature>
<feature type="binding site" evidence="1">
    <location>
        <position position="164"/>
    </location>
    <ligand>
        <name>Zn(2+)</name>
        <dbReference type="ChEBI" id="CHEBI:29105"/>
    </ligand>
</feature>
<feature type="binding site" evidence="1">
    <location>
        <begin position="201"/>
        <end position="203"/>
    </location>
    <ligand>
        <name>NAD(+)</name>
        <dbReference type="ChEBI" id="CHEBI:57540"/>
    </ligand>
</feature>
<feature type="binding site" evidence="1">
    <location>
        <position position="245"/>
    </location>
    <ligand>
        <name>NAD(+)</name>
        <dbReference type="ChEBI" id="CHEBI:57540"/>
    </ligand>
</feature>
<proteinExistence type="inferred from homology"/>
<comment type="function">
    <text evidence="1">NAD-dependent lysine deacetylase and desuccinylase that specifically removes acetyl and succinyl groups on target proteins. Modulates the activities of several proteins which are inactive in their acylated form.</text>
</comment>
<comment type="catalytic activity">
    <reaction evidence="1">
        <text>N(6)-acetyl-L-lysyl-[protein] + NAD(+) + H2O = 2''-O-acetyl-ADP-D-ribose + nicotinamide + L-lysyl-[protein]</text>
        <dbReference type="Rhea" id="RHEA:43636"/>
        <dbReference type="Rhea" id="RHEA-COMP:9752"/>
        <dbReference type="Rhea" id="RHEA-COMP:10731"/>
        <dbReference type="ChEBI" id="CHEBI:15377"/>
        <dbReference type="ChEBI" id="CHEBI:17154"/>
        <dbReference type="ChEBI" id="CHEBI:29969"/>
        <dbReference type="ChEBI" id="CHEBI:57540"/>
        <dbReference type="ChEBI" id="CHEBI:61930"/>
        <dbReference type="ChEBI" id="CHEBI:83767"/>
        <dbReference type="EC" id="2.3.1.286"/>
    </reaction>
</comment>
<comment type="catalytic activity">
    <reaction evidence="1">
        <text>N(6)-succinyl-L-lysyl-[protein] + NAD(+) + H2O = 2''-O-succinyl-ADP-D-ribose + nicotinamide + L-lysyl-[protein]</text>
        <dbReference type="Rhea" id="RHEA:47668"/>
        <dbReference type="Rhea" id="RHEA-COMP:9752"/>
        <dbReference type="Rhea" id="RHEA-COMP:11877"/>
        <dbReference type="ChEBI" id="CHEBI:15377"/>
        <dbReference type="ChEBI" id="CHEBI:17154"/>
        <dbReference type="ChEBI" id="CHEBI:29969"/>
        <dbReference type="ChEBI" id="CHEBI:57540"/>
        <dbReference type="ChEBI" id="CHEBI:87830"/>
        <dbReference type="ChEBI" id="CHEBI:87832"/>
    </reaction>
</comment>
<comment type="cofactor">
    <cofactor evidence="1">
        <name>Zn(2+)</name>
        <dbReference type="ChEBI" id="CHEBI:29105"/>
    </cofactor>
    <text evidence="1">Binds 1 zinc ion per subunit.</text>
</comment>
<comment type="subcellular location">
    <subcellularLocation>
        <location evidence="1">Cytoplasm</location>
    </subcellularLocation>
</comment>
<comment type="domain">
    <text evidence="1">2 residues (Tyr-73 and Arg-76) present in a large hydrophobic pocket are probably involved in substrate specificity. They are important for desuccinylation activity, but dispensable for deacetylation activity.</text>
</comment>
<comment type="similarity">
    <text evidence="1">Belongs to the sirtuin family. Class III subfamily.</text>
</comment>
<accession>Q8NSM4</accession>
<dbReference type="EC" id="2.3.1.286" evidence="1 2"/>
<dbReference type="EMBL" id="BA000036">
    <property type="protein sequence ID" value="BAB98037.1"/>
    <property type="molecule type" value="Genomic_DNA"/>
</dbReference>
<dbReference type="EMBL" id="BX927149">
    <property type="protein sequence ID" value="CAF19350.1"/>
    <property type="molecule type" value="Genomic_DNA"/>
</dbReference>
<dbReference type="RefSeq" id="NP_599877.1">
    <property type="nucleotide sequence ID" value="NC_003450.3"/>
</dbReference>
<dbReference type="RefSeq" id="WP_003854640.1">
    <property type="nucleotide sequence ID" value="NC_006958.1"/>
</dbReference>
<dbReference type="SMR" id="Q8NSM4"/>
<dbReference type="STRING" id="196627.cg0745"/>
<dbReference type="KEGG" id="cgb:cg0745"/>
<dbReference type="KEGG" id="cgl:Cgl0644"/>
<dbReference type="PATRIC" id="fig|196627.13.peg.629"/>
<dbReference type="eggNOG" id="COG0846">
    <property type="taxonomic scope" value="Bacteria"/>
</dbReference>
<dbReference type="HOGENOM" id="CLU_023643_3_1_11"/>
<dbReference type="OrthoDB" id="9800582at2"/>
<dbReference type="BioCyc" id="CORYNE:G18NG-10206-MONOMER"/>
<dbReference type="Proteomes" id="UP000000582">
    <property type="component" value="Chromosome"/>
</dbReference>
<dbReference type="Proteomes" id="UP000001009">
    <property type="component" value="Chromosome"/>
</dbReference>
<dbReference type="GO" id="GO:0005737">
    <property type="term" value="C:cytoplasm"/>
    <property type="evidence" value="ECO:0007669"/>
    <property type="project" value="UniProtKB-SubCell"/>
</dbReference>
<dbReference type="GO" id="GO:0017136">
    <property type="term" value="F:histone deacetylase activity, NAD-dependent"/>
    <property type="evidence" value="ECO:0007669"/>
    <property type="project" value="TreeGrafter"/>
</dbReference>
<dbReference type="GO" id="GO:0070403">
    <property type="term" value="F:NAD+ binding"/>
    <property type="evidence" value="ECO:0007669"/>
    <property type="project" value="UniProtKB-UniRule"/>
</dbReference>
<dbReference type="GO" id="GO:0036054">
    <property type="term" value="F:protein-malonyllysine demalonylase activity"/>
    <property type="evidence" value="ECO:0007669"/>
    <property type="project" value="InterPro"/>
</dbReference>
<dbReference type="GO" id="GO:0036055">
    <property type="term" value="F:protein-succinyllysine desuccinylase activity"/>
    <property type="evidence" value="ECO:0007669"/>
    <property type="project" value="UniProtKB-UniRule"/>
</dbReference>
<dbReference type="GO" id="GO:0008270">
    <property type="term" value="F:zinc ion binding"/>
    <property type="evidence" value="ECO:0007669"/>
    <property type="project" value="UniProtKB-UniRule"/>
</dbReference>
<dbReference type="CDD" id="cd01412">
    <property type="entry name" value="SIRT5_Af1_CobB"/>
    <property type="match status" value="1"/>
</dbReference>
<dbReference type="Gene3D" id="3.30.1600.10">
    <property type="entry name" value="SIR2/SIRT2 'Small Domain"/>
    <property type="match status" value="1"/>
</dbReference>
<dbReference type="Gene3D" id="3.40.50.1220">
    <property type="entry name" value="TPP-binding domain"/>
    <property type="match status" value="1"/>
</dbReference>
<dbReference type="HAMAP" id="MF_01121">
    <property type="entry name" value="Sirtuin_ClassIII"/>
    <property type="match status" value="1"/>
</dbReference>
<dbReference type="InterPro" id="IPR029035">
    <property type="entry name" value="DHS-like_NAD/FAD-binding_dom"/>
</dbReference>
<dbReference type="InterPro" id="IPR050134">
    <property type="entry name" value="NAD-dep_sirtuin_deacylases"/>
</dbReference>
<dbReference type="InterPro" id="IPR003000">
    <property type="entry name" value="Sirtuin"/>
</dbReference>
<dbReference type="InterPro" id="IPR026591">
    <property type="entry name" value="Sirtuin_cat_small_dom_sf"/>
</dbReference>
<dbReference type="InterPro" id="IPR027546">
    <property type="entry name" value="Sirtuin_class_III"/>
</dbReference>
<dbReference type="InterPro" id="IPR026590">
    <property type="entry name" value="Ssirtuin_cat_dom"/>
</dbReference>
<dbReference type="NCBIfam" id="NF001753">
    <property type="entry name" value="PRK00481.1-3"/>
    <property type="match status" value="1"/>
</dbReference>
<dbReference type="PANTHER" id="PTHR11085:SF4">
    <property type="entry name" value="NAD-DEPENDENT PROTEIN DEACYLASE"/>
    <property type="match status" value="1"/>
</dbReference>
<dbReference type="PANTHER" id="PTHR11085">
    <property type="entry name" value="NAD-DEPENDENT PROTEIN DEACYLASE SIRTUIN-5, MITOCHONDRIAL-RELATED"/>
    <property type="match status" value="1"/>
</dbReference>
<dbReference type="Pfam" id="PF02146">
    <property type="entry name" value="SIR2"/>
    <property type="match status" value="1"/>
</dbReference>
<dbReference type="SUPFAM" id="SSF52467">
    <property type="entry name" value="DHS-like NAD/FAD-binding domain"/>
    <property type="match status" value="1"/>
</dbReference>
<dbReference type="PROSITE" id="PS50305">
    <property type="entry name" value="SIRTUIN"/>
    <property type="match status" value="1"/>
</dbReference>
<sequence length="258" mass="28628">MSERQLEKSIEHAVELAREARNIEVFTGAGMSADSGLETYRDDKTGLWSNVDPQAMASIDAWRKDPEPMWAWYRWRAGVAARAEPNAGHQAISYWEGSDTVEHVHITTQNIDNLHERAGSSDVTHLHGSLFEYRCSDCATPWEDDKNYPQEPIARLAPPQCEKCGGLIRPGVVWFGENLPVEEWDIAEQRIAEADLMIIVGTSGIVHPAAALPQLAQQRGVPIVEISPTRTELSRIADFTWMSTAAQALPALMRGLSA</sequence>
<protein>
    <recommendedName>
        <fullName evidence="1">NAD-dependent protein deacylase</fullName>
        <ecNumber evidence="1 2">2.3.1.286</ecNumber>
    </recommendedName>
    <alternativeName>
        <fullName evidence="1">Regulatory protein SIR2 homolog</fullName>
    </alternativeName>
</protein>
<reference key="1">
    <citation type="journal article" date="2003" name="Appl. Microbiol. Biotechnol.">
        <title>The Corynebacterium glutamicum genome: features and impacts on biotechnological processes.</title>
        <authorList>
            <person name="Ikeda M."/>
            <person name="Nakagawa S."/>
        </authorList>
    </citation>
    <scope>NUCLEOTIDE SEQUENCE [LARGE SCALE GENOMIC DNA]</scope>
    <source>
        <strain>ATCC 13032 / DSM 20300 / JCM 1318 / BCRC 11384 / CCUG 27702 / LMG 3730 / NBRC 12168 / NCIMB 10025 / NRRL B-2784 / 534</strain>
    </source>
</reference>
<reference key="2">
    <citation type="journal article" date="2003" name="J. Biotechnol.">
        <title>The complete Corynebacterium glutamicum ATCC 13032 genome sequence and its impact on the production of L-aspartate-derived amino acids and vitamins.</title>
        <authorList>
            <person name="Kalinowski J."/>
            <person name="Bathe B."/>
            <person name="Bartels D."/>
            <person name="Bischoff N."/>
            <person name="Bott M."/>
            <person name="Burkovski A."/>
            <person name="Dusch N."/>
            <person name="Eggeling L."/>
            <person name="Eikmanns B.J."/>
            <person name="Gaigalat L."/>
            <person name="Goesmann A."/>
            <person name="Hartmann M."/>
            <person name="Huthmacher K."/>
            <person name="Kraemer R."/>
            <person name="Linke B."/>
            <person name="McHardy A.C."/>
            <person name="Meyer F."/>
            <person name="Moeckel B."/>
            <person name="Pfefferle W."/>
            <person name="Puehler A."/>
            <person name="Rey D.A."/>
            <person name="Rueckert C."/>
            <person name="Rupp O."/>
            <person name="Sahm H."/>
            <person name="Wendisch V.F."/>
            <person name="Wiegraebe I."/>
            <person name="Tauch A."/>
        </authorList>
    </citation>
    <scope>NUCLEOTIDE SEQUENCE [LARGE SCALE GENOMIC DNA]</scope>
    <source>
        <strain>ATCC 13032 / DSM 20300 / JCM 1318 / BCRC 11384 / CCUG 27702 / LMG 3730 / NBRC 12168 / NCIMB 10025 / NRRL B-2784 / 534</strain>
    </source>
</reference>
<name>NPD_CORGL</name>
<evidence type="ECO:0000255" key="1">
    <source>
        <dbReference type="HAMAP-Rule" id="MF_01121"/>
    </source>
</evidence>
<evidence type="ECO:0000255" key="2">
    <source>
        <dbReference type="PROSITE-ProRule" id="PRU00236"/>
    </source>
</evidence>
<organism>
    <name type="scientific">Corynebacterium glutamicum (strain ATCC 13032 / DSM 20300 / JCM 1318 / BCRC 11384 / CCUG 27702 / LMG 3730 / NBRC 12168 / NCIMB 10025 / NRRL B-2784 / 534)</name>
    <dbReference type="NCBI Taxonomy" id="196627"/>
    <lineage>
        <taxon>Bacteria</taxon>
        <taxon>Bacillati</taxon>
        <taxon>Actinomycetota</taxon>
        <taxon>Actinomycetes</taxon>
        <taxon>Mycobacteriales</taxon>
        <taxon>Corynebacteriaceae</taxon>
        <taxon>Corynebacterium</taxon>
    </lineage>
</organism>
<gene>
    <name evidence="1" type="primary">cobB</name>
    <name type="ordered locus">Cgl0644</name>
    <name type="ordered locus">cg0745</name>
</gene>
<keyword id="KW-0963">Cytoplasm</keyword>
<keyword id="KW-0479">Metal-binding</keyword>
<keyword id="KW-0520">NAD</keyword>
<keyword id="KW-1185">Reference proteome</keyword>
<keyword id="KW-0808">Transferase</keyword>
<keyword id="KW-0862">Zinc</keyword>